<gene>
    <name type="ordered locus">CHY_0341</name>
</gene>
<comment type="similarity">
    <text evidence="2">Belongs to the UPF0758 family.</text>
</comment>
<reference key="1">
    <citation type="journal article" date="2005" name="PLoS Genet.">
        <title>Life in hot carbon monoxide: the complete genome sequence of Carboxydothermus hydrogenoformans Z-2901.</title>
        <authorList>
            <person name="Wu M."/>
            <person name="Ren Q."/>
            <person name="Durkin A.S."/>
            <person name="Daugherty S.C."/>
            <person name="Brinkac L.M."/>
            <person name="Dodson R.J."/>
            <person name="Madupu R."/>
            <person name="Sullivan S.A."/>
            <person name="Kolonay J.F."/>
            <person name="Nelson W.C."/>
            <person name="Tallon L.J."/>
            <person name="Jones K.M."/>
            <person name="Ulrich L.E."/>
            <person name="Gonzalez J.M."/>
            <person name="Zhulin I.B."/>
            <person name="Robb F.T."/>
            <person name="Eisen J.A."/>
        </authorList>
    </citation>
    <scope>NUCLEOTIDE SEQUENCE [LARGE SCALE GENOMIC DNA]</scope>
    <source>
        <strain>ATCC BAA-161 / DSM 6008 / Z-2901</strain>
    </source>
</reference>
<keyword id="KW-0378">Hydrolase</keyword>
<keyword id="KW-0479">Metal-binding</keyword>
<keyword id="KW-0482">Metalloprotease</keyword>
<keyword id="KW-0645">Protease</keyword>
<keyword id="KW-1185">Reference proteome</keyword>
<keyword id="KW-0862">Zinc</keyword>
<protein>
    <recommendedName>
        <fullName>UPF0758 protein CHY_0341</fullName>
    </recommendedName>
</protein>
<feature type="chain" id="PRO_0000322682" description="UPF0758 protein CHY_0341">
    <location>
        <begin position="1"/>
        <end position="226"/>
    </location>
</feature>
<feature type="domain" description="MPN" evidence="1">
    <location>
        <begin position="104"/>
        <end position="226"/>
    </location>
</feature>
<feature type="short sequence motif" description="JAMM motif" evidence="1">
    <location>
        <begin position="175"/>
        <end position="188"/>
    </location>
</feature>
<feature type="binding site" evidence="1">
    <location>
        <position position="175"/>
    </location>
    <ligand>
        <name>Zn(2+)</name>
        <dbReference type="ChEBI" id="CHEBI:29105"/>
        <note>catalytic</note>
    </ligand>
</feature>
<feature type="binding site" evidence="1">
    <location>
        <position position="177"/>
    </location>
    <ligand>
        <name>Zn(2+)</name>
        <dbReference type="ChEBI" id="CHEBI:29105"/>
        <note>catalytic</note>
    </ligand>
</feature>
<feature type="binding site" evidence="1">
    <location>
        <position position="188"/>
    </location>
    <ligand>
        <name>Zn(2+)</name>
        <dbReference type="ChEBI" id="CHEBI:29105"/>
        <note>catalytic</note>
    </ligand>
</feature>
<organism>
    <name type="scientific">Carboxydothermus hydrogenoformans (strain ATCC BAA-161 / DSM 6008 / Z-2901)</name>
    <dbReference type="NCBI Taxonomy" id="246194"/>
    <lineage>
        <taxon>Bacteria</taxon>
        <taxon>Bacillati</taxon>
        <taxon>Bacillota</taxon>
        <taxon>Clostridia</taxon>
        <taxon>Thermoanaerobacterales</taxon>
        <taxon>Thermoanaerobacteraceae</taxon>
        <taxon>Carboxydothermus</taxon>
    </lineage>
</organism>
<dbReference type="EMBL" id="CP000141">
    <property type="protein sequence ID" value="ABB13672.1"/>
    <property type="molecule type" value="Genomic_DNA"/>
</dbReference>
<dbReference type="RefSeq" id="WP_011343280.1">
    <property type="nucleotide sequence ID" value="NC_007503.1"/>
</dbReference>
<dbReference type="SMR" id="Q3AF80"/>
<dbReference type="FunCoup" id="Q3AF80">
    <property type="interactions" value="211"/>
</dbReference>
<dbReference type="STRING" id="246194.CHY_0341"/>
<dbReference type="KEGG" id="chy:CHY_0341"/>
<dbReference type="eggNOG" id="COG2003">
    <property type="taxonomic scope" value="Bacteria"/>
</dbReference>
<dbReference type="HOGENOM" id="CLU_073529_0_2_9"/>
<dbReference type="InParanoid" id="Q3AF80"/>
<dbReference type="OrthoDB" id="9804482at2"/>
<dbReference type="Proteomes" id="UP000002706">
    <property type="component" value="Chromosome"/>
</dbReference>
<dbReference type="GO" id="GO:0046872">
    <property type="term" value="F:metal ion binding"/>
    <property type="evidence" value="ECO:0007669"/>
    <property type="project" value="UniProtKB-KW"/>
</dbReference>
<dbReference type="GO" id="GO:0008237">
    <property type="term" value="F:metallopeptidase activity"/>
    <property type="evidence" value="ECO:0007669"/>
    <property type="project" value="UniProtKB-KW"/>
</dbReference>
<dbReference type="GO" id="GO:0006508">
    <property type="term" value="P:proteolysis"/>
    <property type="evidence" value="ECO:0007669"/>
    <property type="project" value="UniProtKB-KW"/>
</dbReference>
<dbReference type="CDD" id="cd08071">
    <property type="entry name" value="MPN_DUF2466"/>
    <property type="match status" value="1"/>
</dbReference>
<dbReference type="Gene3D" id="1.10.150.20">
    <property type="entry name" value="5' to 3' exonuclease, C-terminal subdomain"/>
    <property type="match status" value="1"/>
</dbReference>
<dbReference type="Gene3D" id="3.40.140.10">
    <property type="entry name" value="Cytidine Deaminase, domain 2"/>
    <property type="match status" value="1"/>
</dbReference>
<dbReference type="InterPro" id="IPR037518">
    <property type="entry name" value="MPN"/>
</dbReference>
<dbReference type="InterPro" id="IPR025657">
    <property type="entry name" value="RadC_JAB"/>
</dbReference>
<dbReference type="InterPro" id="IPR010994">
    <property type="entry name" value="RuvA_2-like"/>
</dbReference>
<dbReference type="InterPro" id="IPR001405">
    <property type="entry name" value="UPF0758"/>
</dbReference>
<dbReference type="InterPro" id="IPR020891">
    <property type="entry name" value="UPF0758_CS"/>
</dbReference>
<dbReference type="InterPro" id="IPR046778">
    <property type="entry name" value="UPF0758_N"/>
</dbReference>
<dbReference type="NCBIfam" id="NF000642">
    <property type="entry name" value="PRK00024.1"/>
    <property type="match status" value="1"/>
</dbReference>
<dbReference type="NCBIfam" id="TIGR00608">
    <property type="entry name" value="radc"/>
    <property type="match status" value="1"/>
</dbReference>
<dbReference type="PANTHER" id="PTHR30471">
    <property type="entry name" value="DNA REPAIR PROTEIN RADC"/>
    <property type="match status" value="1"/>
</dbReference>
<dbReference type="PANTHER" id="PTHR30471:SF3">
    <property type="entry name" value="UPF0758 PROTEIN YEES-RELATED"/>
    <property type="match status" value="1"/>
</dbReference>
<dbReference type="Pfam" id="PF04002">
    <property type="entry name" value="RadC"/>
    <property type="match status" value="1"/>
</dbReference>
<dbReference type="Pfam" id="PF20582">
    <property type="entry name" value="UPF0758_N"/>
    <property type="match status" value="1"/>
</dbReference>
<dbReference type="SUPFAM" id="SSF102712">
    <property type="entry name" value="JAB1/MPN domain"/>
    <property type="match status" value="1"/>
</dbReference>
<dbReference type="SUPFAM" id="SSF47781">
    <property type="entry name" value="RuvA domain 2-like"/>
    <property type="match status" value="1"/>
</dbReference>
<dbReference type="PROSITE" id="PS50249">
    <property type="entry name" value="MPN"/>
    <property type="match status" value="1"/>
</dbReference>
<dbReference type="PROSITE" id="PS01302">
    <property type="entry name" value="UPF0758"/>
    <property type="match status" value="1"/>
</dbReference>
<accession>Q3AF80</accession>
<evidence type="ECO:0000255" key="1">
    <source>
        <dbReference type="PROSITE-ProRule" id="PRU01182"/>
    </source>
</evidence>
<evidence type="ECO:0000305" key="2"/>
<proteinExistence type="inferred from homology"/>
<sequence length="226" mass="25010">MGEKIKNLPEELRPRERLLRHGPESLNPAELLAVLLGSGTPQENALELALRLLTTFGGLKGLIEVHPEQLKSFKGIGQAKAAKLLAALELARRYYELTGENKLNFLNPDDVYNYLRYKIGHKKQEQVVVLYLNTKNQLCGENIVAIGGVNHAGVSPGDIFREAVKIGAYAVIIAHNHPSGDPTPSKEDIDFTGRVKKASEILGIKLLDHIILGENKYISMKAERLF</sequence>
<name>Y341_CARHZ</name>